<keyword id="KW-0067">ATP-binding</keyword>
<keyword id="KW-0963">Cytoplasm</keyword>
<keyword id="KW-0436">Ligase</keyword>
<keyword id="KW-0547">Nucleotide-binding</keyword>
<keyword id="KW-0658">Purine biosynthesis</keyword>
<comment type="catalytic activity">
    <reaction evidence="1">
        <text>2-formamido-N(1)-(5-O-phospho-beta-D-ribosyl)acetamidine + ATP = 5-amino-1-(5-phospho-beta-D-ribosyl)imidazole + ADP + phosphate + H(+)</text>
        <dbReference type="Rhea" id="RHEA:23032"/>
        <dbReference type="ChEBI" id="CHEBI:15378"/>
        <dbReference type="ChEBI" id="CHEBI:30616"/>
        <dbReference type="ChEBI" id="CHEBI:43474"/>
        <dbReference type="ChEBI" id="CHEBI:137981"/>
        <dbReference type="ChEBI" id="CHEBI:147287"/>
        <dbReference type="ChEBI" id="CHEBI:456216"/>
        <dbReference type="EC" id="6.3.3.1"/>
    </reaction>
</comment>
<comment type="pathway">
    <text evidence="1">Purine metabolism; IMP biosynthesis via de novo pathway; 5-amino-1-(5-phospho-D-ribosyl)imidazole from N(2)-formyl-N(1)-(5-phospho-D-ribosyl)glycinamide: step 2/2.</text>
</comment>
<comment type="subcellular location">
    <subcellularLocation>
        <location evidence="1">Cytoplasm</location>
    </subcellularLocation>
</comment>
<comment type="similarity">
    <text evidence="1">Belongs to the AIR synthase family.</text>
</comment>
<sequence>MTQNTSLSYRDAGVDIDAGDALVERIKPLAKKTLREGVLGGIGGFGALFEVPKRYKEPVLVSGTDGVGTKLRLAFDLNRHDTVGQDLVAMSVNDILVLGAESLFFLDYFACGKLDVDTAAAVVGGIAKGCELAGCALIGGETAEMPGMYPAGEYDLAGFAVGVVEKSKAIDGKASITPGDVVLGLASSGAHSNGYSLVRKIIERSKPDMNAKFDGERTLADVVMAPTRIYVKQVLATMQKVTIKGMAHITGGGLLENVPRVLPENTVAELEKAAWPRPKLFDWMQAEGNVAENEMHRVFNCGIGLVIVVAAADADAAMAELKAQGEAVYRIGKIRARSGDEAQTLVV</sequence>
<reference key="1">
    <citation type="journal article" date="2009" name="BMC Genomics">
        <title>Metabolic analysis of the soil microbe Dechloromonas aromatica str. RCB: indications of a surprisingly complex life-style and cryptic anaerobic pathways for aromatic degradation.</title>
        <authorList>
            <person name="Salinero K.K."/>
            <person name="Keller K."/>
            <person name="Feil W.S."/>
            <person name="Feil H."/>
            <person name="Trong S."/>
            <person name="Di Bartolo G."/>
            <person name="Lapidus A."/>
        </authorList>
    </citation>
    <scope>NUCLEOTIDE SEQUENCE [LARGE SCALE GENOMIC DNA]</scope>
    <source>
        <strain>RCB</strain>
    </source>
</reference>
<proteinExistence type="inferred from homology"/>
<feature type="chain" id="PRO_0000258349" description="Phosphoribosylformylglycinamidine cyclo-ligase">
    <location>
        <begin position="1"/>
        <end position="347"/>
    </location>
</feature>
<gene>
    <name evidence="1" type="primary">purM</name>
    <name type="ordered locus">Daro_3174</name>
</gene>
<accession>Q47B77</accession>
<name>PUR5_DECAR</name>
<evidence type="ECO:0000255" key="1">
    <source>
        <dbReference type="HAMAP-Rule" id="MF_00741"/>
    </source>
</evidence>
<protein>
    <recommendedName>
        <fullName evidence="1">Phosphoribosylformylglycinamidine cyclo-ligase</fullName>
        <ecNumber evidence="1">6.3.3.1</ecNumber>
    </recommendedName>
    <alternativeName>
        <fullName evidence="1">AIR synthase</fullName>
    </alternativeName>
    <alternativeName>
        <fullName evidence="1">AIRS</fullName>
    </alternativeName>
    <alternativeName>
        <fullName evidence="1">Phosphoribosyl-aminoimidazole synthetase</fullName>
    </alternativeName>
</protein>
<organism>
    <name type="scientific">Dechloromonas aromatica (strain RCB)</name>
    <dbReference type="NCBI Taxonomy" id="159087"/>
    <lineage>
        <taxon>Bacteria</taxon>
        <taxon>Pseudomonadati</taxon>
        <taxon>Pseudomonadota</taxon>
        <taxon>Betaproteobacteria</taxon>
        <taxon>Rhodocyclales</taxon>
        <taxon>Azonexaceae</taxon>
        <taxon>Dechloromonas</taxon>
    </lineage>
</organism>
<dbReference type="EC" id="6.3.3.1" evidence="1"/>
<dbReference type="EMBL" id="CP000089">
    <property type="protein sequence ID" value="AAZ47904.1"/>
    <property type="molecule type" value="Genomic_DNA"/>
</dbReference>
<dbReference type="SMR" id="Q47B77"/>
<dbReference type="STRING" id="159087.Daro_3174"/>
<dbReference type="KEGG" id="dar:Daro_3174"/>
<dbReference type="eggNOG" id="COG0150">
    <property type="taxonomic scope" value="Bacteria"/>
</dbReference>
<dbReference type="HOGENOM" id="CLU_047116_0_0_4"/>
<dbReference type="OrthoDB" id="9777881at2"/>
<dbReference type="UniPathway" id="UPA00074">
    <property type="reaction ID" value="UER00129"/>
</dbReference>
<dbReference type="GO" id="GO:0005829">
    <property type="term" value="C:cytosol"/>
    <property type="evidence" value="ECO:0007669"/>
    <property type="project" value="TreeGrafter"/>
</dbReference>
<dbReference type="GO" id="GO:0005524">
    <property type="term" value="F:ATP binding"/>
    <property type="evidence" value="ECO:0007669"/>
    <property type="project" value="UniProtKB-KW"/>
</dbReference>
<dbReference type="GO" id="GO:0004637">
    <property type="term" value="F:phosphoribosylamine-glycine ligase activity"/>
    <property type="evidence" value="ECO:0007669"/>
    <property type="project" value="TreeGrafter"/>
</dbReference>
<dbReference type="GO" id="GO:0004641">
    <property type="term" value="F:phosphoribosylformylglycinamidine cyclo-ligase activity"/>
    <property type="evidence" value="ECO:0007669"/>
    <property type="project" value="UniProtKB-UniRule"/>
</dbReference>
<dbReference type="GO" id="GO:0006189">
    <property type="term" value="P:'de novo' IMP biosynthetic process"/>
    <property type="evidence" value="ECO:0007669"/>
    <property type="project" value="UniProtKB-UniRule"/>
</dbReference>
<dbReference type="GO" id="GO:0046084">
    <property type="term" value="P:adenine biosynthetic process"/>
    <property type="evidence" value="ECO:0007669"/>
    <property type="project" value="TreeGrafter"/>
</dbReference>
<dbReference type="CDD" id="cd02196">
    <property type="entry name" value="PurM"/>
    <property type="match status" value="1"/>
</dbReference>
<dbReference type="FunFam" id="3.30.1330.10:FF:000001">
    <property type="entry name" value="Phosphoribosylformylglycinamidine cyclo-ligase"/>
    <property type="match status" value="1"/>
</dbReference>
<dbReference type="FunFam" id="3.90.650.10:FF:000001">
    <property type="entry name" value="Phosphoribosylformylglycinamidine cyclo-ligase"/>
    <property type="match status" value="1"/>
</dbReference>
<dbReference type="Gene3D" id="3.90.650.10">
    <property type="entry name" value="PurM-like C-terminal domain"/>
    <property type="match status" value="1"/>
</dbReference>
<dbReference type="Gene3D" id="3.30.1330.10">
    <property type="entry name" value="PurM-like, N-terminal domain"/>
    <property type="match status" value="1"/>
</dbReference>
<dbReference type="HAMAP" id="MF_00741">
    <property type="entry name" value="AIRS"/>
    <property type="match status" value="1"/>
</dbReference>
<dbReference type="InterPro" id="IPR010918">
    <property type="entry name" value="PurM-like_C_dom"/>
</dbReference>
<dbReference type="InterPro" id="IPR036676">
    <property type="entry name" value="PurM-like_C_sf"/>
</dbReference>
<dbReference type="InterPro" id="IPR016188">
    <property type="entry name" value="PurM-like_N"/>
</dbReference>
<dbReference type="InterPro" id="IPR036921">
    <property type="entry name" value="PurM-like_N_sf"/>
</dbReference>
<dbReference type="InterPro" id="IPR004733">
    <property type="entry name" value="PurM_cligase"/>
</dbReference>
<dbReference type="NCBIfam" id="TIGR00878">
    <property type="entry name" value="purM"/>
    <property type="match status" value="1"/>
</dbReference>
<dbReference type="PANTHER" id="PTHR10520:SF12">
    <property type="entry name" value="TRIFUNCTIONAL PURINE BIOSYNTHETIC PROTEIN ADENOSINE-3"/>
    <property type="match status" value="1"/>
</dbReference>
<dbReference type="PANTHER" id="PTHR10520">
    <property type="entry name" value="TRIFUNCTIONAL PURINE BIOSYNTHETIC PROTEIN ADENOSINE-3-RELATED"/>
    <property type="match status" value="1"/>
</dbReference>
<dbReference type="Pfam" id="PF00586">
    <property type="entry name" value="AIRS"/>
    <property type="match status" value="1"/>
</dbReference>
<dbReference type="Pfam" id="PF02769">
    <property type="entry name" value="AIRS_C"/>
    <property type="match status" value="1"/>
</dbReference>
<dbReference type="SUPFAM" id="SSF56042">
    <property type="entry name" value="PurM C-terminal domain-like"/>
    <property type="match status" value="1"/>
</dbReference>
<dbReference type="SUPFAM" id="SSF55326">
    <property type="entry name" value="PurM N-terminal domain-like"/>
    <property type="match status" value="1"/>
</dbReference>